<organism>
    <name type="scientific">Arabidopsis thaliana</name>
    <name type="common">Mouse-ear cress</name>
    <dbReference type="NCBI Taxonomy" id="3702"/>
    <lineage>
        <taxon>Eukaryota</taxon>
        <taxon>Viridiplantae</taxon>
        <taxon>Streptophyta</taxon>
        <taxon>Embryophyta</taxon>
        <taxon>Tracheophyta</taxon>
        <taxon>Spermatophyta</taxon>
        <taxon>Magnoliopsida</taxon>
        <taxon>eudicotyledons</taxon>
        <taxon>Gunneridae</taxon>
        <taxon>Pentapetalae</taxon>
        <taxon>rosids</taxon>
        <taxon>malvids</taxon>
        <taxon>Brassicales</taxon>
        <taxon>Brassicaceae</taxon>
        <taxon>Camelineae</taxon>
        <taxon>Arabidopsis</taxon>
    </lineage>
</organism>
<reference key="1">
    <citation type="journal article" date="2000" name="Nature">
        <title>Sequence and analysis of chromosome 1 of the plant Arabidopsis thaliana.</title>
        <authorList>
            <person name="Theologis A."/>
            <person name="Ecker J.R."/>
            <person name="Palm C.J."/>
            <person name="Federspiel N.A."/>
            <person name="Kaul S."/>
            <person name="White O."/>
            <person name="Alonso J."/>
            <person name="Altafi H."/>
            <person name="Araujo R."/>
            <person name="Bowman C.L."/>
            <person name="Brooks S.Y."/>
            <person name="Buehler E."/>
            <person name="Chan A."/>
            <person name="Chao Q."/>
            <person name="Chen H."/>
            <person name="Cheuk R.F."/>
            <person name="Chin C.W."/>
            <person name="Chung M.K."/>
            <person name="Conn L."/>
            <person name="Conway A.B."/>
            <person name="Conway A.R."/>
            <person name="Creasy T.H."/>
            <person name="Dewar K."/>
            <person name="Dunn P."/>
            <person name="Etgu P."/>
            <person name="Feldblyum T.V."/>
            <person name="Feng J.-D."/>
            <person name="Fong B."/>
            <person name="Fujii C.Y."/>
            <person name="Gill J.E."/>
            <person name="Goldsmith A.D."/>
            <person name="Haas B."/>
            <person name="Hansen N.F."/>
            <person name="Hughes B."/>
            <person name="Huizar L."/>
            <person name="Hunter J.L."/>
            <person name="Jenkins J."/>
            <person name="Johnson-Hopson C."/>
            <person name="Khan S."/>
            <person name="Khaykin E."/>
            <person name="Kim C.J."/>
            <person name="Koo H.L."/>
            <person name="Kremenetskaia I."/>
            <person name="Kurtz D.B."/>
            <person name="Kwan A."/>
            <person name="Lam B."/>
            <person name="Langin-Hooper S."/>
            <person name="Lee A."/>
            <person name="Lee J.M."/>
            <person name="Lenz C.A."/>
            <person name="Li J.H."/>
            <person name="Li Y.-P."/>
            <person name="Lin X."/>
            <person name="Liu S.X."/>
            <person name="Liu Z.A."/>
            <person name="Luros J.S."/>
            <person name="Maiti R."/>
            <person name="Marziali A."/>
            <person name="Militscher J."/>
            <person name="Miranda M."/>
            <person name="Nguyen M."/>
            <person name="Nierman W.C."/>
            <person name="Osborne B.I."/>
            <person name="Pai G."/>
            <person name="Peterson J."/>
            <person name="Pham P.K."/>
            <person name="Rizzo M."/>
            <person name="Rooney T."/>
            <person name="Rowley D."/>
            <person name="Sakano H."/>
            <person name="Salzberg S.L."/>
            <person name="Schwartz J.R."/>
            <person name="Shinn P."/>
            <person name="Southwick A.M."/>
            <person name="Sun H."/>
            <person name="Tallon L.J."/>
            <person name="Tambunga G."/>
            <person name="Toriumi M.J."/>
            <person name="Town C.D."/>
            <person name="Utterback T."/>
            <person name="Van Aken S."/>
            <person name="Vaysberg M."/>
            <person name="Vysotskaia V.S."/>
            <person name="Walker M."/>
            <person name="Wu D."/>
            <person name="Yu G."/>
            <person name="Fraser C.M."/>
            <person name="Venter J.C."/>
            <person name="Davis R.W."/>
        </authorList>
    </citation>
    <scope>NUCLEOTIDE SEQUENCE [LARGE SCALE GENOMIC DNA]</scope>
    <source>
        <strain>cv. Columbia</strain>
    </source>
</reference>
<reference key="2">
    <citation type="journal article" date="2017" name="Plant J.">
        <title>Araport11: a complete reannotation of the Arabidopsis thaliana reference genome.</title>
        <authorList>
            <person name="Cheng C.Y."/>
            <person name="Krishnakumar V."/>
            <person name="Chan A.P."/>
            <person name="Thibaud-Nissen F."/>
            <person name="Schobel S."/>
            <person name="Town C.D."/>
        </authorList>
    </citation>
    <scope>GENOME REANNOTATION</scope>
    <source>
        <strain>cv. Columbia</strain>
    </source>
</reference>
<reference key="3">
    <citation type="journal article" date="2003" name="Science">
        <title>Empirical analysis of transcriptional activity in the Arabidopsis genome.</title>
        <authorList>
            <person name="Yamada K."/>
            <person name="Lim J."/>
            <person name="Dale J.M."/>
            <person name="Chen H."/>
            <person name="Shinn P."/>
            <person name="Palm C.J."/>
            <person name="Southwick A.M."/>
            <person name="Wu H.C."/>
            <person name="Kim C.J."/>
            <person name="Nguyen M."/>
            <person name="Pham P.K."/>
            <person name="Cheuk R.F."/>
            <person name="Karlin-Newmann G."/>
            <person name="Liu S.X."/>
            <person name="Lam B."/>
            <person name="Sakano H."/>
            <person name="Wu T."/>
            <person name="Yu G."/>
            <person name="Miranda M."/>
            <person name="Quach H.L."/>
            <person name="Tripp M."/>
            <person name="Chang C.H."/>
            <person name="Lee J.M."/>
            <person name="Toriumi M.J."/>
            <person name="Chan M.M."/>
            <person name="Tang C.C."/>
            <person name="Onodera C.S."/>
            <person name="Deng J.M."/>
            <person name="Akiyama K."/>
            <person name="Ansari Y."/>
            <person name="Arakawa T."/>
            <person name="Banh J."/>
            <person name="Banno F."/>
            <person name="Bowser L."/>
            <person name="Brooks S.Y."/>
            <person name="Carninci P."/>
            <person name="Chao Q."/>
            <person name="Choy N."/>
            <person name="Enju A."/>
            <person name="Goldsmith A.D."/>
            <person name="Gurjal M."/>
            <person name="Hansen N.F."/>
            <person name="Hayashizaki Y."/>
            <person name="Johnson-Hopson C."/>
            <person name="Hsuan V.W."/>
            <person name="Iida K."/>
            <person name="Karnes M."/>
            <person name="Khan S."/>
            <person name="Koesema E."/>
            <person name="Ishida J."/>
            <person name="Jiang P.X."/>
            <person name="Jones T."/>
            <person name="Kawai J."/>
            <person name="Kamiya A."/>
            <person name="Meyers C."/>
            <person name="Nakajima M."/>
            <person name="Narusaka M."/>
            <person name="Seki M."/>
            <person name="Sakurai T."/>
            <person name="Satou M."/>
            <person name="Tamse R."/>
            <person name="Vaysberg M."/>
            <person name="Wallender E.K."/>
            <person name="Wong C."/>
            <person name="Yamamura Y."/>
            <person name="Yuan S."/>
            <person name="Shinozaki K."/>
            <person name="Davis R.W."/>
            <person name="Theologis A."/>
            <person name="Ecker J.R."/>
        </authorList>
    </citation>
    <scope>NUCLEOTIDE SEQUENCE [LARGE SCALE MRNA] (ISOFORM 3)</scope>
    <source>
        <strain>cv. Columbia</strain>
    </source>
</reference>
<reference key="4">
    <citation type="submission" date="2002-03" db="EMBL/GenBank/DDBJ databases">
        <title>Full-length cDNA from Arabidopsis thaliana.</title>
        <authorList>
            <person name="Brover V.V."/>
            <person name="Troukhan M.E."/>
            <person name="Alexandrov N.A."/>
            <person name="Lu Y.-P."/>
            <person name="Flavell R.B."/>
            <person name="Feldmann K.A."/>
        </authorList>
    </citation>
    <scope>NUCLEOTIDE SEQUENCE [LARGE SCALE MRNA] (ISOFORM 3)</scope>
</reference>
<reference key="5">
    <citation type="submission" date="2006-07" db="EMBL/GenBank/DDBJ databases">
        <title>Large-scale analysis of RIKEN Arabidopsis full-length (RAFL) cDNAs.</title>
        <authorList>
            <person name="Totoki Y."/>
            <person name="Seki M."/>
            <person name="Ishida J."/>
            <person name="Nakajima M."/>
            <person name="Enju A."/>
            <person name="Kamiya A."/>
            <person name="Narusaka M."/>
            <person name="Shin-i T."/>
            <person name="Nakagawa M."/>
            <person name="Sakamoto N."/>
            <person name="Oishi K."/>
            <person name="Kohara Y."/>
            <person name="Kobayashi M."/>
            <person name="Toyoda A."/>
            <person name="Sakaki Y."/>
            <person name="Sakurai T."/>
            <person name="Iida K."/>
            <person name="Akiyama K."/>
            <person name="Satou M."/>
            <person name="Toyoda T."/>
            <person name="Konagaya A."/>
            <person name="Carninci P."/>
            <person name="Kawai J."/>
            <person name="Hayashizaki Y."/>
            <person name="Shinozaki K."/>
        </authorList>
    </citation>
    <scope>NUCLEOTIDE SEQUENCE [LARGE SCALE MRNA] (ISOFORM 3)</scope>
    <source>
        <strain>cv. Columbia</strain>
    </source>
</reference>
<reference key="6">
    <citation type="journal article" date="2003" name="Mol. Cell. Proteomics">
        <title>Large-scale analysis of in vivo phosphorylated membrane proteins by immobilized metal ion affinity chromatography and mass spectrometry.</title>
        <authorList>
            <person name="Nuehse T.S."/>
            <person name="Stensballe A."/>
            <person name="Jensen O.N."/>
            <person name="Peck S.C."/>
        </authorList>
    </citation>
    <scope>IDENTIFICATION BY MASS SPECTROMETRY [LARGE SCALE ANALYSIS]</scope>
    <source>
        <strain>cv. La-0</strain>
    </source>
</reference>
<reference key="7">
    <citation type="journal article" date="2004" name="Plant Cell">
        <title>Phosphoproteomics of the Arabidopsis plasma membrane and a new phosphorylation site database.</title>
        <authorList>
            <person name="Nuehse T.S."/>
            <person name="Stensballe A."/>
            <person name="Jensen O.N."/>
            <person name="Peck S.C."/>
        </authorList>
    </citation>
    <scope>IDENTIFICATION BY MASS SPECTROMETRY [LARGE SCALE ANALYSIS]</scope>
</reference>
<reference key="8">
    <citation type="journal article" date="2009" name="Plant Physiol.">
        <title>Large-scale Arabidopsis phosphoproteome profiling reveals novel chloroplast kinase substrates and phosphorylation networks.</title>
        <authorList>
            <person name="Reiland S."/>
            <person name="Messerli G."/>
            <person name="Baerenfaller K."/>
            <person name="Gerrits B."/>
            <person name="Endler A."/>
            <person name="Grossmann J."/>
            <person name="Gruissem W."/>
            <person name="Baginsky S."/>
        </authorList>
    </citation>
    <scope>PHOSPHORYLATION [LARGE SCALE ANALYSIS] AT SER-100 AND SER-107</scope>
    <scope>IDENTIFICATION BY MASS SPECTROMETRY [LARGE SCALE ANALYSIS]</scope>
</reference>
<sequence length="148" mass="16339">MEGLQRSTISFRRQGSSGIVFDDRLIAELNKSGNNEQKDESQRDEQPKPMSESSEQVKPIDEKDKLRPIKTGGGAPGGIERSRSNGGGAQRHHRTTGRVSPAVDPPSPRISSCGCCSAFGKNPPGKKVNPRKRPPKRRSRRRIVTKKR</sequence>
<keyword id="KW-0025">Alternative splicing</keyword>
<keyword id="KW-0597">Phosphoprotein</keyword>
<keyword id="KW-1185">Reference proteome</keyword>
<accession>Q9XI29</accession>
<accession>A8MRG0</accession>
<accession>Q3EDC0</accession>
<dbReference type="EMBL" id="AC007591">
    <property type="protein sequence ID" value="AAD39668.1"/>
    <property type="molecule type" value="Genomic_DNA"/>
</dbReference>
<dbReference type="EMBL" id="CP002684">
    <property type="protein sequence ID" value="AEE29316.1"/>
    <property type="molecule type" value="Genomic_DNA"/>
</dbReference>
<dbReference type="EMBL" id="CP002684">
    <property type="protein sequence ID" value="AEE29317.1"/>
    <property type="molecule type" value="Genomic_DNA"/>
</dbReference>
<dbReference type="EMBL" id="CP002684">
    <property type="protein sequence ID" value="AEE29318.1"/>
    <property type="molecule type" value="Genomic_DNA"/>
</dbReference>
<dbReference type="EMBL" id="AF336927">
    <property type="protein sequence ID" value="AAG54008.1"/>
    <property type="molecule type" value="mRNA"/>
</dbReference>
<dbReference type="EMBL" id="AY085171">
    <property type="protein sequence ID" value="AAM61724.1"/>
    <property type="molecule type" value="mRNA"/>
</dbReference>
<dbReference type="EMBL" id="AK228431">
    <property type="protein sequence ID" value="BAF00363.1"/>
    <property type="molecule type" value="mRNA"/>
</dbReference>
<dbReference type="PIR" id="F86288">
    <property type="entry name" value="F86288"/>
</dbReference>
<dbReference type="RefSeq" id="NP_001077541.1">
    <molecule id="Q9XI29-1"/>
    <property type="nucleotide sequence ID" value="NM_001084072.1"/>
</dbReference>
<dbReference type="RefSeq" id="NP_563975.2">
    <molecule id="Q9XI29-2"/>
    <property type="nucleotide sequence ID" value="NM_101409.3"/>
</dbReference>
<dbReference type="RefSeq" id="NP_849670.1">
    <molecule id="Q9XI29-3"/>
    <property type="nucleotide sequence ID" value="NM_179339.2"/>
</dbReference>
<dbReference type="FunCoup" id="Q9XI29">
    <property type="interactions" value="517"/>
</dbReference>
<dbReference type="STRING" id="3702.Q9XI29"/>
<dbReference type="iPTMnet" id="Q9XI29"/>
<dbReference type="SwissPalm" id="Q9XI29"/>
<dbReference type="PaxDb" id="3702-AT1G15400.3"/>
<dbReference type="ProteomicsDB" id="242421">
    <molecule id="Q9XI29-1"/>
</dbReference>
<dbReference type="EnsemblPlants" id="AT1G15400.1">
    <molecule id="Q9XI29-2"/>
    <property type="protein sequence ID" value="AT1G15400.1"/>
    <property type="gene ID" value="AT1G15400"/>
</dbReference>
<dbReference type="EnsemblPlants" id="AT1G15400.2">
    <molecule id="Q9XI29-3"/>
    <property type="protein sequence ID" value="AT1G15400.2"/>
    <property type="gene ID" value="AT1G15400"/>
</dbReference>
<dbReference type="EnsemblPlants" id="AT1G15400.3">
    <molecule id="Q9XI29-1"/>
    <property type="protein sequence ID" value="AT1G15400.3"/>
    <property type="gene ID" value="AT1G15400"/>
</dbReference>
<dbReference type="GeneID" id="838110"/>
<dbReference type="Gramene" id="AT1G15400.1">
    <molecule id="Q9XI29-2"/>
    <property type="protein sequence ID" value="AT1G15400.1"/>
    <property type="gene ID" value="AT1G15400"/>
</dbReference>
<dbReference type="Gramene" id="AT1G15400.2">
    <molecule id="Q9XI29-3"/>
    <property type="protein sequence ID" value="AT1G15400.2"/>
    <property type="gene ID" value="AT1G15400"/>
</dbReference>
<dbReference type="Gramene" id="AT1G15400.3">
    <molecule id="Q9XI29-1"/>
    <property type="protein sequence ID" value="AT1G15400.3"/>
    <property type="gene ID" value="AT1G15400"/>
</dbReference>
<dbReference type="KEGG" id="ath:AT1G15400"/>
<dbReference type="Araport" id="AT1G15400"/>
<dbReference type="TAIR" id="AT1G15400"/>
<dbReference type="eggNOG" id="ENOG502S5HJ">
    <property type="taxonomic scope" value="Eukaryota"/>
</dbReference>
<dbReference type="HOGENOM" id="CLU_123547_0_0_1"/>
<dbReference type="InParanoid" id="Q9XI29"/>
<dbReference type="OMA" id="PVKHKEE"/>
<dbReference type="OrthoDB" id="689003at2759"/>
<dbReference type="PhylomeDB" id="Q9XI29"/>
<dbReference type="PRO" id="PR:Q9XI29"/>
<dbReference type="Proteomes" id="UP000006548">
    <property type="component" value="Chromosome 1"/>
</dbReference>
<dbReference type="ExpressionAtlas" id="Q9XI29">
    <property type="expression patterns" value="baseline and differential"/>
</dbReference>
<dbReference type="GO" id="GO:0005634">
    <property type="term" value="C:nucleus"/>
    <property type="evidence" value="ECO:0000314"/>
    <property type="project" value="TAIR"/>
</dbReference>
<dbReference type="GO" id="GO:0005886">
    <property type="term" value="C:plasma membrane"/>
    <property type="evidence" value="ECO:0000314"/>
    <property type="project" value="TAIR"/>
</dbReference>
<dbReference type="InterPro" id="IPR031421">
    <property type="entry name" value="DUF4666"/>
</dbReference>
<dbReference type="PANTHER" id="PTHR33730:SF4">
    <property type="entry name" value="OS05G0542732 PROTEIN"/>
    <property type="match status" value="1"/>
</dbReference>
<dbReference type="PANTHER" id="PTHR33730">
    <property type="entry name" value="OS05G0542732 PROTEIN-RELATED"/>
    <property type="match status" value="1"/>
</dbReference>
<dbReference type="Pfam" id="PF15697">
    <property type="entry name" value="DUF4666"/>
    <property type="match status" value="1"/>
</dbReference>
<feature type="chain" id="PRO_0000326464" description="Uncharacterized protein At1g15400">
    <location>
        <begin position="1"/>
        <end position="148"/>
    </location>
</feature>
<feature type="region of interest" description="Disordered" evidence="1">
    <location>
        <begin position="1"/>
        <end position="148"/>
    </location>
</feature>
<feature type="compositionally biased region" description="Polar residues" evidence="1">
    <location>
        <begin position="1"/>
        <end position="17"/>
    </location>
</feature>
<feature type="compositionally biased region" description="Basic and acidic residues" evidence="1">
    <location>
        <begin position="36"/>
        <end position="47"/>
    </location>
</feature>
<feature type="compositionally biased region" description="Basic and acidic residues" evidence="1">
    <location>
        <begin position="58"/>
        <end position="67"/>
    </location>
</feature>
<feature type="compositionally biased region" description="Basic residues" evidence="1">
    <location>
        <begin position="128"/>
        <end position="148"/>
    </location>
</feature>
<feature type="modified residue" description="Phosphoserine" evidence="6">
    <location>
        <position position="100"/>
    </location>
</feature>
<feature type="modified residue" description="Phosphoserine" evidence="6">
    <location>
        <position position="107"/>
    </location>
</feature>
<feature type="splice variant" id="VSP_032664" description="In isoform 3." evidence="2 3 4">
    <location>
        <begin position="141"/>
        <end position="148"/>
    </location>
</feature>
<feature type="splice variant" id="VSP_032662" description="In isoform 2." evidence="5">
    <original>RRIVT</original>
    <variation>EGGGS</variation>
    <location>
        <begin position="141"/>
        <end position="145"/>
    </location>
</feature>
<feature type="splice variant" id="VSP_032663" description="In isoform 2." evidence="5">
    <location>
        <begin position="146"/>
        <end position="148"/>
    </location>
</feature>
<gene>
    <name type="ordered locus">At1g15400</name>
    <name type="ORF">F9L1.35</name>
</gene>
<comment type="alternative products">
    <event type="alternative splicing"/>
    <isoform>
        <id>Q9XI29-1</id>
        <name>1</name>
        <sequence type="displayed"/>
    </isoform>
    <isoform>
        <id>Q9XI29-2</id>
        <name>2</name>
        <sequence type="described" ref="VSP_032662 VSP_032663"/>
    </isoform>
    <isoform>
        <id>Q9XI29-3</id>
        <name>3</name>
        <sequence type="described" ref="VSP_032664"/>
    </isoform>
</comment>
<evidence type="ECO:0000256" key="1">
    <source>
        <dbReference type="SAM" id="MobiDB-lite"/>
    </source>
</evidence>
<evidence type="ECO:0000303" key="2">
    <source>
    </source>
</evidence>
<evidence type="ECO:0000303" key="3">
    <source ref="4"/>
</evidence>
<evidence type="ECO:0000303" key="4">
    <source ref="5"/>
</evidence>
<evidence type="ECO:0000305" key="5"/>
<evidence type="ECO:0007744" key="6">
    <source>
    </source>
</evidence>
<proteinExistence type="evidence at protein level"/>
<protein>
    <recommendedName>
        <fullName>Uncharacterized protein At1g15400</fullName>
    </recommendedName>
</protein>
<name>Y1540_ARATH</name>